<evidence type="ECO:0000250" key="1">
    <source>
        <dbReference type="UniProtKB" id="B1AZI6"/>
    </source>
</evidence>
<evidence type="ECO:0000250" key="2">
    <source>
        <dbReference type="UniProtKB" id="Q8NI27"/>
    </source>
</evidence>
<evidence type="ECO:0000255" key="3"/>
<evidence type="ECO:0000256" key="4">
    <source>
        <dbReference type="SAM" id="MobiDB-lite"/>
    </source>
</evidence>
<evidence type="ECO:0000305" key="5"/>
<organism>
    <name type="scientific">Plecturocebus moloch</name>
    <name type="common">Dusky titi monkey</name>
    <name type="synonym">Callicebus moloch</name>
    <dbReference type="NCBI Taxonomy" id="9523"/>
    <lineage>
        <taxon>Eukaryota</taxon>
        <taxon>Metazoa</taxon>
        <taxon>Chordata</taxon>
        <taxon>Craniata</taxon>
        <taxon>Vertebrata</taxon>
        <taxon>Euteleostomi</taxon>
        <taxon>Mammalia</taxon>
        <taxon>Eutheria</taxon>
        <taxon>Euarchontoglires</taxon>
        <taxon>Primates</taxon>
        <taxon>Haplorrhini</taxon>
        <taxon>Platyrrhini</taxon>
        <taxon>Pitheciidae</taxon>
        <taxon>Callicebinae</taxon>
        <taxon>Plecturocebus</taxon>
    </lineage>
</organism>
<sequence>MAAAAVVVPAEWIKNWEKSGRGEFLHLCRILSENKSHDSSTYRDFQQALYELSYHVIKGNLKHEQASNVLNDISEFREDMPSILADVFCILDIETNCLEEKSKRDYFTQLVLACLYLVSDTVLKERLDPETLESLGLIKQSQQFNQKSVKIKTKLFYKQQKFNLLREENEGYAKLIAELGQDLSGSITSDLILENIKSLIGCFNLDPNRVLDVILEVFECRPEHDDFFISLLESYMSMCEPQTLCHILGFKFKFYQEPNGETPSSLYRVAAVLLQFNLIDLDDLYVHLLPADNCIMDEHKREIAEAKQIVRKLTMVVLSSEKMDDREKEKEKEEEKVEKPPDNQKLGLLEALLKIGDWQHAQNIMDQMPPYYAASHKLIALAICKLIHITIEPLYRRVGVPKGAKGSPVNALQNKRAPKQAESFEDLRRDVFNMFCYLGPHLSHDPILFAKVVRIGKSFMKEFQSDGSKQEDKEKTEVILSCLLSITDQVLLPSLSLMDCNACMSEELWGMFKTFPYQHRYRLYGQWKNETYNSHPLLVKVKAQTIDRAKYIMKRLTKENVKPSGRQIGKLSHSNPTILFDYILSQIQKYDNLIIPVVDSLKYLTSLNYDVLAYCIIEALANPEKERMKHDDTTISSWLQSLASFCGAVFRKYPIDLAGLLQYVANQLKAGKSFDLLILKEVVQKMAGIEITEEMTMEQLEAMTGGEQLKAEGGYFGQIRNTKKSSQRLKDALLDHDLALPLCLLMAQQRNGVIFQEGGEKHLKLVGKLYDQCHDTLVQFGGFLASNLSTEDYIKRVPSIDVLCNEFHTPHDAAFFLSRPMYAHHISSKYDELKKSEKGSKQQHKVHKYITSCEMVMAPVHEAVVSLHVSKVWDDISPQFYATFWSLTMYDLAVPHTSYEREVNKLKVQMKAIDDNQEMPPNKKKKEKERCTALQDKLLEEEKKQMEHVQRVLQRLKLEKDNWLLAKSTKNETITKFLQLCIFPRCIFSAIDAVYCARFVELVHQQKTPNFSTLLCYDRVFSDIIYTVASCTENEASRYGRFLCCMLETVTRWHSDRATYEKECGNYPGFLTILRATGFDGGNKADQLDYENFRHVVHKWHYKLTKASVHCLETGEYTHIRNILIVLTKILPWYPKVLNLGQALERRVHKICQEEKEKRPDLYALAMGYSGQLKSRKSYMIPENEFHHKDPSPRNAVASVQNGPGCGPSPSSTGSTSKSDESSAEETDKSRERSQCGVKAVNKASSTTPKGNSSNGNSGSNSNKAVKENDKEKGKEKEKEKKEKTPATTPEARILGKDGKEKPKEERPNKDEKARETKERTPKSDKEKEKFKKEEKVKDEKFKTTVPNAESKSSQEREREKEPSRERDIAKEMKSKENVKGGEKTPVSGSLKSPVPRSDIPEPEREQKRRKIDTHPSPSHSSTVKDSLIELKESSAKLYINHTPPPLSKSKEREMDKKDLDKSRERSREREKKDEKDRKERKRDHSNSDREVPPDLTKRRKEENGTMGVSKHKSESPCESPYPNEKDKEKNKSKSSGKEKGSDSFKSEKMDKISSGGKKESRHDKEKIEKKEKRDSSGGKEEKKQYPFHLDVFSQYNGKL</sequence>
<feature type="chain" id="PRO_0000384396" description="THO complex subunit 2">
    <location>
        <begin position="1"/>
        <end position="1600"/>
    </location>
</feature>
<feature type="region of interest" description="Anchor domain; interaction with THOC5 and THOC7" evidence="2">
    <location>
        <begin position="1"/>
        <end position="163"/>
    </location>
</feature>
<feature type="region of interest" description="Bow domain; interaction with THOC1 dock domain and THOC3" evidence="2">
    <location>
        <begin position="164"/>
        <end position="534"/>
    </location>
</feature>
<feature type="region of interest" description="Disordered" evidence="4">
    <location>
        <begin position="321"/>
        <end position="341"/>
    </location>
</feature>
<feature type="region of interest" description="MIF4G domain; interaction with THOC3 and DDX39B" evidence="2">
    <location>
        <begin position="535"/>
        <end position="686"/>
    </location>
</feature>
<feature type="region of interest" description="Stern domain" evidence="2">
    <location>
        <begin position="687"/>
        <end position="1174"/>
    </location>
</feature>
<feature type="region of interest" description="Charged domain" evidence="2">
    <location>
        <begin position="1175"/>
        <end position="1597"/>
    </location>
</feature>
<feature type="region of interest" description="Disordered" evidence="4">
    <location>
        <begin position="1184"/>
        <end position="1600"/>
    </location>
</feature>
<feature type="coiled-coil region" evidence="3">
    <location>
        <begin position="293"/>
        <end position="339"/>
    </location>
</feature>
<feature type="coiled-coil region" evidence="3">
    <location>
        <begin position="896"/>
        <end position="965"/>
    </location>
</feature>
<feature type="coiled-coil region" evidence="3">
    <location>
        <begin position="1464"/>
        <end position="1491"/>
    </location>
</feature>
<feature type="short sequence motif" description="Nuclear localization signal" evidence="3">
    <location>
        <begin position="923"/>
        <end position="928"/>
    </location>
</feature>
<feature type="compositionally biased region" description="Low complexity" evidence="4">
    <location>
        <begin position="1208"/>
        <end position="1217"/>
    </location>
</feature>
<feature type="compositionally biased region" description="Basic and acidic residues" evidence="4">
    <location>
        <begin position="1218"/>
        <end position="1234"/>
    </location>
</feature>
<feature type="compositionally biased region" description="Low complexity" evidence="4">
    <location>
        <begin position="1251"/>
        <end position="1263"/>
    </location>
</feature>
<feature type="compositionally biased region" description="Basic and acidic residues" evidence="4">
    <location>
        <begin position="1265"/>
        <end position="1285"/>
    </location>
</feature>
<feature type="compositionally biased region" description="Basic and acidic residues" evidence="4">
    <location>
        <begin position="1294"/>
        <end position="1343"/>
    </location>
</feature>
<feature type="compositionally biased region" description="Basic and acidic residues" evidence="4">
    <location>
        <begin position="1353"/>
        <end position="1383"/>
    </location>
</feature>
<feature type="compositionally biased region" description="Polar residues" evidence="4">
    <location>
        <begin position="1416"/>
        <end position="1425"/>
    </location>
</feature>
<feature type="compositionally biased region" description="Basic and acidic residues" evidence="4">
    <location>
        <begin position="1449"/>
        <end position="1504"/>
    </location>
</feature>
<feature type="compositionally biased region" description="Basic and acidic residues" evidence="4">
    <location>
        <begin position="1524"/>
        <end position="1585"/>
    </location>
</feature>
<feature type="modified residue" description="Phosphoserine" evidence="1">
    <location>
        <position position="1222"/>
    </location>
</feature>
<feature type="modified residue" description="Phosphothreonine" evidence="2">
    <location>
        <position position="1385"/>
    </location>
</feature>
<feature type="modified residue" description="Phosphoserine" evidence="2">
    <location>
        <position position="1390"/>
    </location>
</feature>
<feature type="modified residue" description="Phosphoserine" evidence="2">
    <location>
        <position position="1393"/>
    </location>
</feature>
<feature type="modified residue" description="Phosphoserine" evidence="2">
    <location>
        <position position="1417"/>
    </location>
</feature>
<feature type="modified residue" description="Phosphothreonine" evidence="2">
    <location>
        <position position="1443"/>
    </location>
</feature>
<feature type="modified residue" description="Phosphoserine" evidence="2">
    <location>
        <position position="1450"/>
    </location>
</feature>
<feature type="modified residue" description="Phosphoserine" evidence="2">
    <location>
        <position position="1486"/>
    </location>
</feature>
<feature type="modified residue" description="Phosphoserine" evidence="2">
    <location>
        <position position="1516"/>
    </location>
</feature>
<reference key="1">
    <citation type="submission" date="2008-03" db="EMBL/GenBank/DDBJ databases">
        <title>NISC comparative sequencing initiative.</title>
        <authorList>
            <person name="Antonellis A."/>
            <person name="Ayele K."/>
            <person name="Benjamin B."/>
            <person name="Blakesley R.W."/>
            <person name="Boakye A."/>
            <person name="Bouffard G.G."/>
            <person name="Brinkley C."/>
            <person name="Brooks S."/>
            <person name="Chu G."/>
            <person name="Coleman H."/>
            <person name="Engle J."/>
            <person name="Gestole M."/>
            <person name="Greene A."/>
            <person name="Guan X."/>
            <person name="Gupta J."/>
            <person name="Haghighi P."/>
            <person name="Han J."/>
            <person name="Hansen N."/>
            <person name="Ho S.-L."/>
            <person name="Hu P."/>
            <person name="Hunter G."/>
            <person name="Hurle B."/>
            <person name="Idol J.R."/>
            <person name="Kwong P."/>
            <person name="Laric P."/>
            <person name="Larson S."/>
            <person name="Lee-Lin S.-Q."/>
            <person name="Legaspi R."/>
            <person name="Madden M."/>
            <person name="Maduro Q.L."/>
            <person name="Maduro V.B."/>
            <person name="Margulies E.H."/>
            <person name="Masiello C."/>
            <person name="Maskeri B."/>
            <person name="McDowell J."/>
            <person name="Mojidi H.A."/>
            <person name="Mullikin J.C."/>
            <person name="Oestreicher J.S."/>
            <person name="Park M."/>
            <person name="Portnoy M.E."/>
            <person name="Prasad A."/>
            <person name="Puri O."/>
            <person name="Reddix-Dugue N."/>
            <person name="Schandler K."/>
            <person name="Schueler M.G."/>
            <person name="Sison C."/>
            <person name="Stantripop S."/>
            <person name="Stephen E."/>
            <person name="Taye A."/>
            <person name="Thomas J.W."/>
            <person name="Thomas P.J."/>
            <person name="Tsipouri V."/>
            <person name="Ung L."/>
            <person name="Vogt J.L."/>
            <person name="Wetherby K.D."/>
            <person name="Young A."/>
            <person name="Green E.D."/>
        </authorList>
    </citation>
    <scope>NUCLEOTIDE SEQUENCE [LARGE SCALE GENOMIC DNA]</scope>
</reference>
<protein>
    <recommendedName>
        <fullName>THO complex subunit 2</fullName>
        <shortName>Tho2</shortName>
    </recommendedName>
</protein>
<proteinExistence type="inferred from homology"/>
<accession>B1MTK1</accession>
<gene>
    <name type="primary">THOC2</name>
</gene>
<keyword id="KW-0175">Coiled coil</keyword>
<keyword id="KW-0963">Cytoplasm</keyword>
<keyword id="KW-0507">mRNA processing</keyword>
<keyword id="KW-0508">mRNA splicing</keyword>
<keyword id="KW-0509">mRNA transport</keyword>
<keyword id="KW-0539">Nucleus</keyword>
<keyword id="KW-0597">Phosphoprotein</keyword>
<keyword id="KW-0694">RNA-binding</keyword>
<keyword id="KW-0813">Transport</keyword>
<comment type="function">
    <text evidence="2">Component of the THO subcomplex of the TREX complex which is thought to couple mRNA transcription, processing and nuclear export, and which specifically associates with spliced mRNA and not with unspliced pre-mRNA. Required for efficient export of polyadenylated RNA and spliced mRNA. The THOC1-THOC2-THOC3 core complex alone is sufficient to bind export factor NXF1-NXT1 and promote ATPase activity of DDX39B; in the complex THOC2 is the only component that directly interacts with DDX39B. TREX is recruited to spliced mRNAs by a transcription-independent mechanism, binds to mRNA upstream of the exon-junction complex (EJC) and is recruited in a splicing- and cap-dependent manner to a region near the 5' end of the mRNA where it functions in mRNA export to the cytoplasm via the TAP/NXF1 pathway. Required for NXF1 localization to the nuclear rim. THOC2 (and probably the THO complex) is involved in releasing mRNA from nuclear speckle domains. Plays a role for proper neuronal development.</text>
</comment>
<comment type="subunit">
    <text evidence="2">Component of the THO subcomplex, which is composed of THOC1, THOC2, THOC3, THOC5, THOC6 and THOC7. The THO subcomplex interacts with DDX39B to form the THO-DDX39B complex which multimerizes into a 28-subunit tetrameric assembly. Component of the transcription/export (TREX) complex at least composed of ALYREF/THOC4, DDX39B, SARNP/CIP29, CHTOP and the THO subcomplex; in the complex interacts with THOC1, THOC3, THOC5, THOC7 and DDX39B. TREX seems to have a dynamic structure involving ATP-dependent remodeling. Interacts with POLDIP3 and ZC3H11A.</text>
</comment>
<comment type="subcellular location">
    <subcellularLocation>
        <location evidence="2">Nucleus</location>
    </subcellularLocation>
    <subcellularLocation>
        <location evidence="2">Nucleus speckle</location>
    </subcellularLocation>
    <subcellularLocation>
        <location evidence="2">Cytoplasm</location>
    </subcellularLocation>
</comment>
<comment type="similarity">
    <text evidence="5">Belongs to the THOC2 family.</text>
</comment>
<name>THOC2_PLEMO</name>
<dbReference type="EMBL" id="DP000639">
    <property type="protein sequence ID" value="ACA57923.1"/>
    <property type="molecule type" value="Genomic_DNA"/>
</dbReference>
<dbReference type="SMR" id="B1MTK1"/>
<dbReference type="GO" id="GO:0005737">
    <property type="term" value="C:cytoplasm"/>
    <property type="evidence" value="ECO:0000250"/>
    <property type="project" value="UniProtKB"/>
</dbReference>
<dbReference type="GO" id="GO:0016607">
    <property type="term" value="C:nuclear speck"/>
    <property type="evidence" value="ECO:0007669"/>
    <property type="project" value="UniProtKB-SubCell"/>
</dbReference>
<dbReference type="GO" id="GO:0005634">
    <property type="term" value="C:nucleus"/>
    <property type="evidence" value="ECO:0000250"/>
    <property type="project" value="UniProtKB"/>
</dbReference>
<dbReference type="GO" id="GO:0000445">
    <property type="term" value="C:THO complex part of transcription export complex"/>
    <property type="evidence" value="ECO:0007669"/>
    <property type="project" value="TreeGrafter"/>
</dbReference>
<dbReference type="GO" id="GO:0003729">
    <property type="term" value="F:mRNA binding"/>
    <property type="evidence" value="ECO:0007669"/>
    <property type="project" value="TreeGrafter"/>
</dbReference>
<dbReference type="GO" id="GO:0048699">
    <property type="term" value="P:generation of neurons"/>
    <property type="evidence" value="ECO:0000250"/>
    <property type="project" value="UniProtKB"/>
</dbReference>
<dbReference type="GO" id="GO:0006406">
    <property type="term" value="P:mRNA export from nucleus"/>
    <property type="evidence" value="ECO:0007669"/>
    <property type="project" value="InterPro"/>
</dbReference>
<dbReference type="GO" id="GO:0006397">
    <property type="term" value="P:mRNA processing"/>
    <property type="evidence" value="ECO:0007669"/>
    <property type="project" value="UniProtKB-KW"/>
</dbReference>
<dbReference type="GO" id="GO:0048666">
    <property type="term" value="P:neuron development"/>
    <property type="evidence" value="ECO:0000250"/>
    <property type="project" value="UniProtKB"/>
</dbReference>
<dbReference type="GO" id="GO:0008380">
    <property type="term" value="P:RNA splicing"/>
    <property type="evidence" value="ECO:0007669"/>
    <property type="project" value="UniProtKB-KW"/>
</dbReference>
<dbReference type="InterPro" id="IPR040007">
    <property type="entry name" value="Tho2"/>
</dbReference>
<dbReference type="InterPro" id="IPR021418">
    <property type="entry name" value="THO_THOC2_C"/>
</dbReference>
<dbReference type="InterPro" id="IPR021726">
    <property type="entry name" value="THO_THOC2_N"/>
</dbReference>
<dbReference type="InterPro" id="IPR032302">
    <property type="entry name" value="THOC2_N"/>
</dbReference>
<dbReference type="PANTHER" id="PTHR21597:SF0">
    <property type="entry name" value="THO COMPLEX SUBUNIT 2"/>
    <property type="match status" value="1"/>
</dbReference>
<dbReference type="PANTHER" id="PTHR21597">
    <property type="entry name" value="THO2 PROTEIN"/>
    <property type="match status" value="1"/>
</dbReference>
<dbReference type="Pfam" id="PF11262">
    <property type="entry name" value="Tho2"/>
    <property type="match status" value="1"/>
</dbReference>
<dbReference type="Pfam" id="PF11732">
    <property type="entry name" value="Thoc2"/>
    <property type="match status" value="1"/>
</dbReference>
<dbReference type="Pfam" id="PF16134">
    <property type="entry name" value="THOC2_N"/>
    <property type="match status" value="2"/>
</dbReference>